<reference key="1">
    <citation type="journal article" date="1997" name="Nature">
        <title>The complete genome sequence of the gastric pathogen Helicobacter pylori.</title>
        <authorList>
            <person name="Tomb J.-F."/>
            <person name="White O."/>
            <person name="Kerlavage A.R."/>
            <person name="Clayton R.A."/>
            <person name="Sutton G.G."/>
            <person name="Fleischmann R.D."/>
            <person name="Ketchum K.A."/>
            <person name="Klenk H.-P."/>
            <person name="Gill S.R."/>
            <person name="Dougherty B.A."/>
            <person name="Nelson K.E."/>
            <person name="Quackenbush J."/>
            <person name="Zhou L."/>
            <person name="Kirkness E.F."/>
            <person name="Peterson S.N."/>
            <person name="Loftus B.J."/>
            <person name="Richardson D.L."/>
            <person name="Dodson R.J."/>
            <person name="Khalak H.G."/>
            <person name="Glodek A."/>
            <person name="McKenney K."/>
            <person name="FitzGerald L.M."/>
            <person name="Lee N."/>
            <person name="Adams M.D."/>
            <person name="Hickey E.K."/>
            <person name="Berg D.E."/>
            <person name="Gocayne J.D."/>
            <person name="Utterback T.R."/>
            <person name="Peterson J.D."/>
            <person name="Kelley J.M."/>
            <person name="Cotton M.D."/>
            <person name="Weidman J.F."/>
            <person name="Fujii C."/>
            <person name="Bowman C."/>
            <person name="Watthey L."/>
            <person name="Wallin E."/>
            <person name="Hayes W.S."/>
            <person name="Borodovsky M."/>
            <person name="Karp P.D."/>
            <person name="Smith H.O."/>
            <person name="Fraser C.M."/>
            <person name="Venter J.C."/>
        </authorList>
    </citation>
    <scope>NUCLEOTIDE SEQUENCE [LARGE SCALE GENOMIC DNA]</scope>
    <source>
        <strain>ATCC 700392 / 26695</strain>
    </source>
</reference>
<gene>
    <name evidence="1" type="primary">bamD</name>
    <name type="ordered locus">HP_1378</name>
</gene>
<comment type="function">
    <text evidence="1">Part of the outer membrane protein assembly complex, which is involved in assembly and insertion of beta-barrel proteins into the outer membrane.</text>
</comment>
<comment type="subunit">
    <text evidence="1">Part of the Bam complex.</text>
</comment>
<comment type="subcellular location">
    <subcellularLocation>
        <location evidence="1">Cell outer membrane</location>
        <topology evidence="1">Lipid-anchor</topology>
    </subcellularLocation>
</comment>
<comment type="similarity">
    <text evidence="1">Belongs to the BamD family.</text>
</comment>
<organism>
    <name type="scientific">Helicobacter pylori (strain ATCC 700392 / 26695)</name>
    <name type="common">Campylobacter pylori</name>
    <dbReference type="NCBI Taxonomy" id="85962"/>
    <lineage>
        <taxon>Bacteria</taxon>
        <taxon>Pseudomonadati</taxon>
        <taxon>Campylobacterota</taxon>
        <taxon>Epsilonproteobacteria</taxon>
        <taxon>Campylobacterales</taxon>
        <taxon>Helicobacteraceae</taxon>
        <taxon>Helicobacter</taxon>
    </lineage>
</organism>
<evidence type="ECO:0000255" key="1">
    <source>
        <dbReference type="HAMAP-Rule" id="MF_00922"/>
    </source>
</evidence>
<name>BAMD_HELPY</name>
<accession>O25930</accession>
<keyword id="KW-0998">Cell outer membrane</keyword>
<keyword id="KW-0449">Lipoprotein</keyword>
<keyword id="KW-0472">Membrane</keyword>
<keyword id="KW-0564">Palmitate</keyword>
<keyword id="KW-1185">Reference proteome</keyword>
<keyword id="KW-0732">Signal</keyword>
<feature type="signal peptide" evidence="1">
    <location>
        <begin position="1"/>
        <end position="22"/>
    </location>
</feature>
<feature type="chain" id="PRO_0000417618" description="Outer membrane protein assembly factor BamD">
    <location>
        <begin position="23"/>
        <end position="220"/>
    </location>
</feature>
<feature type="lipid moiety-binding region" description="N-palmitoyl cysteine" evidence="1">
    <location>
        <position position="23"/>
    </location>
</feature>
<feature type="lipid moiety-binding region" description="S-diacylglycerol cysteine" evidence="1">
    <location>
        <position position="23"/>
    </location>
</feature>
<proteinExistence type="inferred from homology"/>
<dbReference type="EMBL" id="AE000511">
    <property type="protein sequence ID" value="AAD08420.1"/>
    <property type="molecule type" value="Genomic_DNA"/>
</dbReference>
<dbReference type="PIR" id="B64692">
    <property type="entry name" value="B64692"/>
</dbReference>
<dbReference type="RefSeq" id="NP_208169.1">
    <property type="nucleotide sequence ID" value="NC_000915.1"/>
</dbReference>
<dbReference type="RefSeq" id="WP_001237316.1">
    <property type="nucleotide sequence ID" value="NC_018939.1"/>
</dbReference>
<dbReference type="SMR" id="O25930"/>
<dbReference type="DIP" id="DIP-3517N"/>
<dbReference type="IntAct" id="O25930">
    <property type="interactions" value="2"/>
</dbReference>
<dbReference type="MINT" id="O25930"/>
<dbReference type="STRING" id="85962.HP_1378"/>
<dbReference type="PaxDb" id="85962-C694_07115"/>
<dbReference type="EnsemblBacteria" id="AAD08420">
    <property type="protein sequence ID" value="AAD08420"/>
    <property type="gene ID" value="HP_1378"/>
</dbReference>
<dbReference type="KEGG" id="heo:C694_07115"/>
<dbReference type="KEGG" id="hpy:HP_1378"/>
<dbReference type="PATRIC" id="fig|85962.47.peg.1476"/>
<dbReference type="eggNOG" id="COG4105">
    <property type="taxonomic scope" value="Bacteria"/>
</dbReference>
<dbReference type="InParanoid" id="O25930"/>
<dbReference type="OrthoDB" id="5342947at2"/>
<dbReference type="Proteomes" id="UP000000429">
    <property type="component" value="Chromosome"/>
</dbReference>
<dbReference type="GO" id="GO:1990063">
    <property type="term" value="C:Bam protein complex"/>
    <property type="evidence" value="ECO:0000318"/>
    <property type="project" value="GO_Central"/>
</dbReference>
<dbReference type="GO" id="GO:0051205">
    <property type="term" value="P:protein insertion into membrane"/>
    <property type="evidence" value="ECO:0000318"/>
    <property type="project" value="GO_Central"/>
</dbReference>
<dbReference type="FunFam" id="1.25.40.10:FF:000270">
    <property type="entry name" value="Outer membrane protein assembly factor BamD"/>
    <property type="match status" value="1"/>
</dbReference>
<dbReference type="Gene3D" id="1.25.40.10">
    <property type="entry name" value="Tetratricopeptide repeat domain"/>
    <property type="match status" value="1"/>
</dbReference>
<dbReference type="HAMAP" id="MF_00922">
    <property type="entry name" value="OM_assembly_BamD"/>
    <property type="match status" value="1"/>
</dbReference>
<dbReference type="InterPro" id="IPR017689">
    <property type="entry name" value="BamD"/>
</dbReference>
<dbReference type="InterPro" id="IPR039565">
    <property type="entry name" value="BamD-like"/>
</dbReference>
<dbReference type="InterPro" id="IPR011990">
    <property type="entry name" value="TPR-like_helical_dom_sf"/>
</dbReference>
<dbReference type="NCBIfam" id="TIGR03302">
    <property type="entry name" value="OM_YfiO"/>
    <property type="match status" value="1"/>
</dbReference>
<dbReference type="Pfam" id="PF13525">
    <property type="entry name" value="YfiO"/>
    <property type="match status" value="1"/>
</dbReference>
<dbReference type="PROSITE" id="PS51257">
    <property type="entry name" value="PROKAR_LIPOPROTEIN"/>
    <property type="match status" value="1"/>
</dbReference>
<sequence>MRLKHFKTFLFITMAIIVIGTGCANKKKKKDEYNKPAIFWYQGILREILFANLETADNYYSSLQSEHINSPLVPEAMLALGQAHMKKKEYVLASFYFDEYIKRFGTKDNVDYLTFLKLQSHYYAFKNHSKDQEFISNSIVSLGEFIEKYPNSRYRPYVEYMQIKFILGQNELNRAIANVYKKRHKPEGVKRYLERIDETLEKETKPKPSHMPWYVLIFDW</sequence>
<protein>
    <recommendedName>
        <fullName evidence="1">Outer membrane protein assembly factor BamD</fullName>
    </recommendedName>
</protein>